<feature type="signal peptide" evidence="2">
    <location>
        <begin position="1" status="less than"/>
        <end position="10"/>
    </location>
</feature>
<feature type="propeptide" id="PRO_0000462268" evidence="2">
    <location>
        <begin position="11"/>
        <end position="18"/>
    </location>
</feature>
<feature type="chain" id="PRO_0000022848" description="Basic phospholipase A2 beta-bungarotoxin A-AL3 chain" evidence="2">
    <location>
        <begin position="19"/>
        <end position="138"/>
    </location>
</feature>
<feature type="active site" evidence="3">
    <location>
        <position position="66"/>
    </location>
</feature>
<feature type="active site" evidence="3">
    <location>
        <position position="112"/>
    </location>
</feature>
<feature type="binding site" evidence="2">
    <location>
        <position position="46"/>
    </location>
    <ligand>
        <name>Ca(2+)</name>
        <dbReference type="ChEBI" id="CHEBI:29108"/>
    </ligand>
</feature>
<feature type="binding site" evidence="2">
    <location>
        <position position="48"/>
    </location>
    <ligand>
        <name>Ca(2+)</name>
        <dbReference type="ChEBI" id="CHEBI:29108"/>
    </ligand>
</feature>
<feature type="binding site" evidence="2">
    <location>
        <position position="50"/>
    </location>
    <ligand>
        <name>Ca(2+)</name>
        <dbReference type="ChEBI" id="CHEBI:29108"/>
    </ligand>
</feature>
<feature type="binding site" evidence="2">
    <location>
        <position position="67"/>
    </location>
    <ligand>
        <name>Ca(2+)</name>
        <dbReference type="ChEBI" id="CHEBI:29108"/>
    </ligand>
</feature>
<feature type="disulfide bond" description="Interchain (with a B chain)" evidence="2">
    <location>
        <position position="33"/>
    </location>
</feature>
<feature type="disulfide bond" evidence="2">
    <location>
        <begin position="45"/>
        <end position="137"/>
    </location>
</feature>
<feature type="disulfide bond" evidence="2">
    <location>
        <begin position="47"/>
        <end position="63"/>
    </location>
</feature>
<feature type="disulfide bond" evidence="2">
    <location>
        <begin position="62"/>
        <end position="118"/>
    </location>
</feature>
<feature type="disulfide bond" evidence="2">
    <location>
        <begin position="69"/>
        <end position="111"/>
    </location>
</feature>
<feature type="disulfide bond" evidence="2">
    <location>
        <begin position="79"/>
        <end position="104"/>
    </location>
</feature>
<feature type="disulfide bond" evidence="2">
    <location>
        <begin position="97"/>
        <end position="109"/>
    </location>
</feature>
<feature type="non-terminal residue" evidence="7">
    <location>
        <position position="1"/>
    </location>
</feature>
<keyword id="KW-0106">Calcium</keyword>
<keyword id="KW-1015">Disulfide bond</keyword>
<keyword id="KW-0378">Hydrolase</keyword>
<keyword id="KW-0442">Lipid degradation</keyword>
<keyword id="KW-0443">Lipid metabolism</keyword>
<keyword id="KW-0479">Metal-binding</keyword>
<keyword id="KW-0528">Neurotoxin</keyword>
<keyword id="KW-0638">Presynaptic neurotoxin</keyword>
<keyword id="KW-0964">Secreted</keyword>
<keyword id="KW-0732">Signal</keyword>
<keyword id="KW-0800">Toxin</keyword>
<dbReference type="EC" id="3.1.1.4"/>
<dbReference type="EMBL" id="AJ251221">
    <property type="protein sequence ID" value="CAB62501.1"/>
    <property type="molecule type" value="Genomic_DNA"/>
</dbReference>
<dbReference type="SMR" id="Q9PTA6"/>
<dbReference type="GO" id="GO:0005576">
    <property type="term" value="C:extracellular region"/>
    <property type="evidence" value="ECO:0007669"/>
    <property type="project" value="UniProtKB-SubCell"/>
</dbReference>
<dbReference type="GO" id="GO:0005509">
    <property type="term" value="F:calcium ion binding"/>
    <property type="evidence" value="ECO:0007669"/>
    <property type="project" value="InterPro"/>
</dbReference>
<dbReference type="GO" id="GO:0047498">
    <property type="term" value="F:calcium-dependent phospholipase A2 activity"/>
    <property type="evidence" value="ECO:0007669"/>
    <property type="project" value="TreeGrafter"/>
</dbReference>
<dbReference type="GO" id="GO:0005543">
    <property type="term" value="F:phospholipid binding"/>
    <property type="evidence" value="ECO:0007669"/>
    <property type="project" value="TreeGrafter"/>
</dbReference>
<dbReference type="GO" id="GO:0090729">
    <property type="term" value="F:toxin activity"/>
    <property type="evidence" value="ECO:0007669"/>
    <property type="project" value="UniProtKB-KW"/>
</dbReference>
<dbReference type="GO" id="GO:0050482">
    <property type="term" value="P:arachidonate secretion"/>
    <property type="evidence" value="ECO:0007669"/>
    <property type="project" value="InterPro"/>
</dbReference>
<dbReference type="GO" id="GO:0016042">
    <property type="term" value="P:lipid catabolic process"/>
    <property type="evidence" value="ECO:0007669"/>
    <property type="project" value="UniProtKB-KW"/>
</dbReference>
<dbReference type="GO" id="GO:0006644">
    <property type="term" value="P:phospholipid metabolic process"/>
    <property type="evidence" value="ECO:0007669"/>
    <property type="project" value="InterPro"/>
</dbReference>
<dbReference type="CDD" id="cd00125">
    <property type="entry name" value="PLA2c"/>
    <property type="match status" value="1"/>
</dbReference>
<dbReference type="FunFam" id="1.20.90.10:FF:000007">
    <property type="entry name" value="Acidic phospholipase A2"/>
    <property type="match status" value="1"/>
</dbReference>
<dbReference type="Gene3D" id="1.20.90.10">
    <property type="entry name" value="Phospholipase A2 domain"/>
    <property type="match status" value="1"/>
</dbReference>
<dbReference type="InterPro" id="IPR001211">
    <property type="entry name" value="PLipase_A2"/>
</dbReference>
<dbReference type="InterPro" id="IPR033112">
    <property type="entry name" value="PLipase_A2_Asp_AS"/>
</dbReference>
<dbReference type="InterPro" id="IPR016090">
    <property type="entry name" value="PLipase_A2_dom"/>
</dbReference>
<dbReference type="InterPro" id="IPR036444">
    <property type="entry name" value="PLipase_A2_dom_sf"/>
</dbReference>
<dbReference type="InterPro" id="IPR033113">
    <property type="entry name" value="PLipase_A2_His_AS"/>
</dbReference>
<dbReference type="PANTHER" id="PTHR11716:SF94">
    <property type="entry name" value="PHOSPHOLIPASE A2"/>
    <property type="match status" value="1"/>
</dbReference>
<dbReference type="PANTHER" id="PTHR11716">
    <property type="entry name" value="PHOSPHOLIPASE A2 FAMILY MEMBER"/>
    <property type="match status" value="1"/>
</dbReference>
<dbReference type="Pfam" id="PF00068">
    <property type="entry name" value="Phospholip_A2_1"/>
    <property type="match status" value="1"/>
</dbReference>
<dbReference type="PRINTS" id="PR00389">
    <property type="entry name" value="PHPHLIPASEA2"/>
</dbReference>
<dbReference type="SMART" id="SM00085">
    <property type="entry name" value="PA2c"/>
    <property type="match status" value="1"/>
</dbReference>
<dbReference type="SUPFAM" id="SSF48619">
    <property type="entry name" value="Phospholipase A2, PLA2"/>
    <property type="match status" value="1"/>
</dbReference>
<dbReference type="PROSITE" id="PS00119">
    <property type="entry name" value="PA2_ASP"/>
    <property type="match status" value="1"/>
</dbReference>
<dbReference type="PROSITE" id="PS00118">
    <property type="entry name" value="PA2_HIS"/>
    <property type="match status" value="1"/>
</dbReference>
<reference key="1">
    <citation type="journal article" date="2000" name="Eur. J. Biochem.">
        <title>Genetic organization of A chain and B chain of beta-bungarotoxin from Taiwan banded krait (Bungarus multicinctus). A chain genes and B chain genes do not share a common origin.</title>
        <authorList>
            <person name="Wu P.-F."/>
            <person name="Chang L.-S."/>
        </authorList>
    </citation>
    <scope>NUCLEOTIDE SEQUENCE [GENOMIC DNA]</scope>
    <source>
        <tissue>Liver</tissue>
    </source>
</reference>
<reference key="2">
    <citation type="journal article" date="2001" name="Toxicon">
        <title>What does beta-bungarotoxin do at the neuromuscular junction?</title>
        <authorList>
            <person name="Rowan E.G."/>
        </authorList>
    </citation>
    <scope>REVIEW</scope>
</reference>
<name>PA2BC_BUNMU</name>
<evidence type="ECO:0000250" key="1"/>
<evidence type="ECO:0000250" key="2">
    <source>
        <dbReference type="UniProtKB" id="P00617"/>
    </source>
</evidence>
<evidence type="ECO:0000250" key="3">
    <source>
        <dbReference type="UniProtKB" id="P14418"/>
    </source>
</evidence>
<evidence type="ECO:0000255" key="4">
    <source>
        <dbReference type="PROSITE-ProRule" id="PRU10035"/>
    </source>
</evidence>
<evidence type="ECO:0000255" key="5">
    <source>
        <dbReference type="PROSITE-ProRule" id="PRU10036"/>
    </source>
</evidence>
<evidence type="ECO:0000305" key="6"/>
<evidence type="ECO:0000305" key="7">
    <source>
    </source>
</evidence>
<organism>
    <name type="scientific">Bungarus multicinctus</name>
    <name type="common">Many-banded krait</name>
    <dbReference type="NCBI Taxonomy" id="8616"/>
    <lineage>
        <taxon>Eukaryota</taxon>
        <taxon>Metazoa</taxon>
        <taxon>Chordata</taxon>
        <taxon>Craniata</taxon>
        <taxon>Vertebrata</taxon>
        <taxon>Euteleostomi</taxon>
        <taxon>Lepidosauria</taxon>
        <taxon>Squamata</taxon>
        <taxon>Bifurcata</taxon>
        <taxon>Unidentata</taxon>
        <taxon>Episquamata</taxon>
        <taxon>Toxicofera</taxon>
        <taxon>Serpentes</taxon>
        <taxon>Colubroidea</taxon>
        <taxon>Elapidae</taxon>
        <taxon>Bungarinae</taxon>
        <taxon>Bungarus</taxon>
    </lineage>
</organism>
<sequence>LAVCVSLIGAANIPPQHLNLYQFKEMIRYTIPCEKTWLEYTDYGCYCGYGGSGTPVDALDRCCYVHDNCYGDAEKKHKCNPKMQLYSYKLTKRTIICYGAAGTCERIVCDCDRTAALCFGNSEYIERHKNIDTKRYCR</sequence>
<proteinExistence type="inferred from homology"/>
<protein>
    <recommendedName>
        <fullName>Basic phospholipase A2 beta-bungarotoxin A-AL3 chain</fullName>
        <shortName>Beta-BuTX A-AL3 chain</shortName>
        <shortName>svPLA2</shortName>
        <ecNumber>3.1.1.4</ecNumber>
    </recommendedName>
    <alternativeName>
        <fullName>Phosphatidylcholine 2-acylhydrolase</fullName>
    </alternativeName>
</protein>
<accession>Q9PTA6</accession>
<comment type="function">
    <text evidence="1">Snake venom phospholipase A2 (PLA2) that inhibits neuromuscular transmission by blocking acetylcholine release from the nerve termini. PLA2 catalyzes the calcium-dependent hydrolysis of the 2-acyl groups in 3-sn-phosphoglycerides (By similarity).</text>
</comment>
<comment type="catalytic activity">
    <reaction evidence="4 5">
        <text>a 1,2-diacyl-sn-glycero-3-phosphocholine + H2O = a 1-acyl-sn-glycero-3-phosphocholine + a fatty acid + H(+)</text>
        <dbReference type="Rhea" id="RHEA:15801"/>
        <dbReference type="ChEBI" id="CHEBI:15377"/>
        <dbReference type="ChEBI" id="CHEBI:15378"/>
        <dbReference type="ChEBI" id="CHEBI:28868"/>
        <dbReference type="ChEBI" id="CHEBI:57643"/>
        <dbReference type="ChEBI" id="CHEBI:58168"/>
        <dbReference type="EC" id="3.1.1.4"/>
    </reaction>
</comment>
<comment type="cofactor">
    <cofactor evidence="2">
        <name>Ca(2+)</name>
        <dbReference type="ChEBI" id="CHEBI:29108"/>
    </cofactor>
    <text evidence="2">Binds 1 Ca(2+) ion.</text>
</comment>
<comment type="subunit">
    <text evidence="2">Heterodimer; disulfide-linked. The A chains have phospholipase A2 activity and the B chains show homology with the basic protease inhibitors.</text>
</comment>
<comment type="subcellular location">
    <subcellularLocation>
        <location evidence="2">Secreted</location>
    </subcellularLocation>
</comment>
<comment type="tissue specificity">
    <text evidence="2">Expressed by the venom gland.</text>
</comment>
<comment type="similarity">
    <text evidence="6">Belongs to the phospholipase A2 family. Group I subfamily. D49 sub-subfamily.</text>
</comment>